<comment type="function">
    <text evidence="1">Responsible for synthesis of pseudouridine from uracil-13 in transfer RNAs.</text>
</comment>
<comment type="catalytic activity">
    <reaction evidence="1">
        <text>uridine(13) in tRNA = pseudouridine(13) in tRNA</text>
        <dbReference type="Rhea" id="RHEA:42540"/>
        <dbReference type="Rhea" id="RHEA-COMP:10105"/>
        <dbReference type="Rhea" id="RHEA-COMP:10106"/>
        <dbReference type="ChEBI" id="CHEBI:65314"/>
        <dbReference type="ChEBI" id="CHEBI:65315"/>
        <dbReference type="EC" id="5.4.99.27"/>
    </reaction>
</comment>
<comment type="similarity">
    <text evidence="1">Belongs to the pseudouridine synthase TruD family.</text>
</comment>
<reference key="1">
    <citation type="journal article" date="2000" name="Nature">
        <title>Complete genome sequence of Pseudomonas aeruginosa PAO1, an opportunistic pathogen.</title>
        <authorList>
            <person name="Stover C.K."/>
            <person name="Pham X.-Q.T."/>
            <person name="Erwin A.L."/>
            <person name="Mizoguchi S.D."/>
            <person name="Warrener P."/>
            <person name="Hickey M.J."/>
            <person name="Brinkman F.S.L."/>
            <person name="Hufnagle W.O."/>
            <person name="Kowalik D.J."/>
            <person name="Lagrou M."/>
            <person name="Garber R.L."/>
            <person name="Goltry L."/>
            <person name="Tolentino E."/>
            <person name="Westbrock-Wadman S."/>
            <person name="Yuan Y."/>
            <person name="Brody L.L."/>
            <person name="Coulter S.N."/>
            <person name="Folger K.R."/>
            <person name="Kas A."/>
            <person name="Larbig K."/>
            <person name="Lim R.M."/>
            <person name="Smith K.A."/>
            <person name="Spencer D.H."/>
            <person name="Wong G.K.-S."/>
            <person name="Wu Z."/>
            <person name="Paulsen I.T."/>
            <person name="Reizer J."/>
            <person name="Saier M.H. Jr."/>
            <person name="Hancock R.E.W."/>
            <person name="Lory S."/>
            <person name="Olson M.V."/>
        </authorList>
    </citation>
    <scope>NUCLEOTIDE SEQUENCE [LARGE SCALE GENOMIC DNA]</scope>
    <source>
        <strain>ATCC 15692 / DSM 22644 / CIP 104116 / JCM 14847 / LMG 12228 / 1C / PRS 101 / PAO1</strain>
    </source>
</reference>
<name>TRUD_PSEAE</name>
<gene>
    <name evidence="1" type="primary">truD</name>
    <name type="ordered locus">PA3626</name>
</gene>
<evidence type="ECO:0000255" key="1">
    <source>
        <dbReference type="HAMAP-Rule" id="MF_01082"/>
    </source>
</evidence>
<accession>Q9HY04</accession>
<feature type="chain" id="PRO_0000152515" description="tRNA pseudouridine synthase D">
    <location>
        <begin position="1"/>
        <end position="355"/>
    </location>
</feature>
<feature type="domain" description="TRUD" evidence="1">
    <location>
        <begin position="160"/>
        <end position="306"/>
    </location>
</feature>
<feature type="active site" description="Nucleophile" evidence="1">
    <location>
        <position position="84"/>
    </location>
</feature>
<organism>
    <name type="scientific">Pseudomonas aeruginosa (strain ATCC 15692 / DSM 22644 / CIP 104116 / JCM 14847 / LMG 12228 / 1C / PRS 101 / PAO1)</name>
    <dbReference type="NCBI Taxonomy" id="208964"/>
    <lineage>
        <taxon>Bacteria</taxon>
        <taxon>Pseudomonadati</taxon>
        <taxon>Pseudomonadota</taxon>
        <taxon>Gammaproteobacteria</taxon>
        <taxon>Pseudomonadales</taxon>
        <taxon>Pseudomonadaceae</taxon>
        <taxon>Pseudomonas</taxon>
    </lineage>
</organism>
<sequence>MSVLGELDLLGPRAHGAACGEAVLKAVAEDFQVDEVLEIPLSGEGEHLWLWVEKRGLNTEEAARRLGRAAGVQQKNVSYAGLKDRQALTRQWFSLHLPGKADPDLGAAEGADLRILRCTRHSRKLQRGAHAANGFTLRLTGLRAERAPLDARLERIAADGVPNYFGLQRFGHGGGNLVDARSCAEQDLLPANRNLRSRFLSAGRSYLFNRLLAERVAEGSWNRAAVGDLLAFTDSRSFFLAGEEECRDARLAALDLHPTGPLWGEGDPPSGAGVLDRELALAGREPALCRWLAKAGMAHERRILRLPIQGLAWHYPEPDVLQLEFVLPAGCFATVVVREILDLVPTGQTENPCAY</sequence>
<dbReference type="EC" id="5.4.99.27" evidence="1"/>
<dbReference type="EMBL" id="AE004091">
    <property type="protein sequence ID" value="AAG07014.1"/>
    <property type="molecule type" value="Genomic_DNA"/>
</dbReference>
<dbReference type="PIR" id="H83193">
    <property type="entry name" value="H83193"/>
</dbReference>
<dbReference type="RefSeq" id="NP_252316.1">
    <property type="nucleotide sequence ID" value="NC_002516.2"/>
</dbReference>
<dbReference type="RefSeq" id="WP_003113870.1">
    <property type="nucleotide sequence ID" value="NZ_QZGE01000001.1"/>
</dbReference>
<dbReference type="SMR" id="Q9HY04"/>
<dbReference type="FunCoup" id="Q9HY04">
    <property type="interactions" value="79"/>
</dbReference>
<dbReference type="STRING" id="208964.PA3626"/>
<dbReference type="PaxDb" id="208964-PA3626"/>
<dbReference type="DNASU" id="880483"/>
<dbReference type="GeneID" id="880483"/>
<dbReference type="KEGG" id="pae:PA3626"/>
<dbReference type="PATRIC" id="fig|208964.12.peg.3795"/>
<dbReference type="PseudoCAP" id="PA3626"/>
<dbReference type="HOGENOM" id="CLU_005281_4_0_6"/>
<dbReference type="InParanoid" id="Q9HY04"/>
<dbReference type="OrthoDB" id="1550679at2"/>
<dbReference type="PhylomeDB" id="Q9HY04"/>
<dbReference type="BioCyc" id="PAER208964:G1FZ6-3696-MONOMER"/>
<dbReference type="Proteomes" id="UP000002438">
    <property type="component" value="Chromosome"/>
</dbReference>
<dbReference type="GO" id="GO:0005829">
    <property type="term" value="C:cytosol"/>
    <property type="evidence" value="ECO:0000318"/>
    <property type="project" value="GO_Central"/>
</dbReference>
<dbReference type="GO" id="GO:0009982">
    <property type="term" value="F:pseudouridine synthase activity"/>
    <property type="evidence" value="ECO:0000318"/>
    <property type="project" value="GO_Central"/>
</dbReference>
<dbReference type="GO" id="GO:0003723">
    <property type="term" value="F:RNA binding"/>
    <property type="evidence" value="ECO:0007669"/>
    <property type="project" value="InterPro"/>
</dbReference>
<dbReference type="GO" id="GO:0160150">
    <property type="term" value="F:tRNA pseudouridine(13) synthase activity"/>
    <property type="evidence" value="ECO:0007669"/>
    <property type="project" value="UniProtKB-EC"/>
</dbReference>
<dbReference type="GO" id="GO:0001522">
    <property type="term" value="P:pseudouridine synthesis"/>
    <property type="evidence" value="ECO:0000318"/>
    <property type="project" value="GO_Central"/>
</dbReference>
<dbReference type="GO" id="GO:0031119">
    <property type="term" value="P:tRNA pseudouridine synthesis"/>
    <property type="evidence" value="ECO:0007669"/>
    <property type="project" value="UniProtKB-UniRule"/>
</dbReference>
<dbReference type="CDD" id="cd02575">
    <property type="entry name" value="PseudoU_synth_EcTruD"/>
    <property type="match status" value="1"/>
</dbReference>
<dbReference type="Gene3D" id="3.30.2350.20">
    <property type="entry name" value="TruD, catalytic domain"/>
    <property type="match status" value="1"/>
</dbReference>
<dbReference type="Gene3D" id="3.30.2340.10">
    <property type="entry name" value="TruD, insertion domain"/>
    <property type="match status" value="1"/>
</dbReference>
<dbReference type="HAMAP" id="MF_01082">
    <property type="entry name" value="TruD"/>
    <property type="match status" value="1"/>
</dbReference>
<dbReference type="InterPro" id="IPR020103">
    <property type="entry name" value="PsdUridine_synth_cat_dom_sf"/>
</dbReference>
<dbReference type="InterPro" id="IPR001656">
    <property type="entry name" value="PsdUridine_synth_TruD"/>
</dbReference>
<dbReference type="InterPro" id="IPR020119">
    <property type="entry name" value="PsdUridine_synth_TruD_CS"/>
</dbReference>
<dbReference type="InterPro" id="IPR011760">
    <property type="entry name" value="PsdUridine_synth_TruD_insert"/>
</dbReference>
<dbReference type="InterPro" id="IPR042214">
    <property type="entry name" value="TruD_catalytic"/>
</dbReference>
<dbReference type="InterPro" id="IPR043165">
    <property type="entry name" value="TruD_insert_sf"/>
</dbReference>
<dbReference type="InterPro" id="IPR050170">
    <property type="entry name" value="TruD_pseudoU_synthase"/>
</dbReference>
<dbReference type="NCBIfam" id="NF002153">
    <property type="entry name" value="PRK00984.1-2"/>
    <property type="match status" value="1"/>
</dbReference>
<dbReference type="PANTHER" id="PTHR47811">
    <property type="entry name" value="TRNA PSEUDOURIDINE SYNTHASE D"/>
    <property type="match status" value="1"/>
</dbReference>
<dbReference type="PANTHER" id="PTHR47811:SF1">
    <property type="entry name" value="TRNA PSEUDOURIDINE SYNTHASE D"/>
    <property type="match status" value="1"/>
</dbReference>
<dbReference type="Pfam" id="PF01142">
    <property type="entry name" value="TruD"/>
    <property type="match status" value="2"/>
</dbReference>
<dbReference type="SUPFAM" id="SSF55120">
    <property type="entry name" value="Pseudouridine synthase"/>
    <property type="match status" value="1"/>
</dbReference>
<dbReference type="PROSITE" id="PS50984">
    <property type="entry name" value="TRUD"/>
    <property type="match status" value="1"/>
</dbReference>
<dbReference type="PROSITE" id="PS01268">
    <property type="entry name" value="UPF0024"/>
    <property type="match status" value="1"/>
</dbReference>
<protein>
    <recommendedName>
        <fullName evidence="1">tRNA pseudouridine synthase D</fullName>
        <ecNumber evidence="1">5.4.99.27</ecNumber>
    </recommendedName>
    <alternativeName>
        <fullName evidence="1">tRNA pseudouridine(13) synthase</fullName>
    </alternativeName>
    <alternativeName>
        <fullName evidence="1">tRNA pseudouridylate synthase D</fullName>
    </alternativeName>
    <alternativeName>
        <fullName evidence="1">tRNA-uridine isomerase D</fullName>
    </alternativeName>
</protein>
<keyword id="KW-0413">Isomerase</keyword>
<keyword id="KW-1185">Reference proteome</keyword>
<keyword id="KW-0819">tRNA processing</keyword>
<proteinExistence type="inferred from homology"/>